<organism>
    <name type="scientific">Desulfitobacterium hafniense (strain Y51)</name>
    <dbReference type="NCBI Taxonomy" id="138119"/>
    <lineage>
        <taxon>Bacteria</taxon>
        <taxon>Bacillati</taxon>
        <taxon>Bacillota</taxon>
        <taxon>Clostridia</taxon>
        <taxon>Eubacteriales</taxon>
        <taxon>Desulfitobacteriaceae</taxon>
        <taxon>Desulfitobacterium</taxon>
    </lineage>
</organism>
<name>TRPD_DESHY</name>
<feature type="chain" id="PRO_0000325421" description="Anthranilate phosphoribosyltransferase">
    <location>
        <begin position="1"/>
        <end position="336"/>
    </location>
</feature>
<feature type="binding site" evidence="1">
    <location>
        <position position="82"/>
    </location>
    <ligand>
        <name>5-phospho-alpha-D-ribose 1-diphosphate</name>
        <dbReference type="ChEBI" id="CHEBI:58017"/>
    </ligand>
</feature>
<feature type="binding site" evidence="1">
    <location>
        <position position="82"/>
    </location>
    <ligand>
        <name>anthranilate</name>
        <dbReference type="ChEBI" id="CHEBI:16567"/>
        <label>1</label>
    </ligand>
</feature>
<feature type="binding site" evidence="1">
    <location>
        <begin position="85"/>
        <end position="86"/>
    </location>
    <ligand>
        <name>5-phospho-alpha-D-ribose 1-diphosphate</name>
        <dbReference type="ChEBI" id="CHEBI:58017"/>
    </ligand>
</feature>
<feature type="binding site" evidence="1">
    <location>
        <position position="90"/>
    </location>
    <ligand>
        <name>5-phospho-alpha-D-ribose 1-diphosphate</name>
        <dbReference type="ChEBI" id="CHEBI:58017"/>
    </ligand>
</feature>
<feature type="binding site" evidence="1">
    <location>
        <begin position="92"/>
        <end position="95"/>
    </location>
    <ligand>
        <name>5-phospho-alpha-D-ribose 1-diphosphate</name>
        <dbReference type="ChEBI" id="CHEBI:58017"/>
    </ligand>
</feature>
<feature type="binding site" evidence="1">
    <location>
        <position position="94"/>
    </location>
    <ligand>
        <name>Mg(2+)</name>
        <dbReference type="ChEBI" id="CHEBI:18420"/>
        <label>1</label>
    </ligand>
</feature>
<feature type="binding site" evidence="1">
    <location>
        <begin position="110"/>
        <end position="118"/>
    </location>
    <ligand>
        <name>5-phospho-alpha-D-ribose 1-diphosphate</name>
        <dbReference type="ChEBI" id="CHEBI:58017"/>
    </ligand>
</feature>
<feature type="binding site" evidence="1">
    <location>
        <position position="113"/>
    </location>
    <ligand>
        <name>anthranilate</name>
        <dbReference type="ChEBI" id="CHEBI:16567"/>
        <label>1</label>
    </ligand>
</feature>
<feature type="binding site" evidence="1">
    <location>
        <position position="122"/>
    </location>
    <ligand>
        <name>5-phospho-alpha-D-ribose 1-diphosphate</name>
        <dbReference type="ChEBI" id="CHEBI:58017"/>
    </ligand>
</feature>
<feature type="binding site" evidence="1">
    <location>
        <position position="168"/>
    </location>
    <ligand>
        <name>anthranilate</name>
        <dbReference type="ChEBI" id="CHEBI:16567"/>
        <label>2</label>
    </ligand>
</feature>
<feature type="binding site" evidence="1">
    <location>
        <position position="227"/>
    </location>
    <ligand>
        <name>Mg(2+)</name>
        <dbReference type="ChEBI" id="CHEBI:18420"/>
        <label>2</label>
    </ligand>
</feature>
<feature type="binding site" evidence="1">
    <location>
        <position position="228"/>
    </location>
    <ligand>
        <name>Mg(2+)</name>
        <dbReference type="ChEBI" id="CHEBI:18420"/>
        <label>1</label>
    </ligand>
</feature>
<feature type="binding site" evidence="1">
    <location>
        <position position="228"/>
    </location>
    <ligand>
        <name>Mg(2+)</name>
        <dbReference type="ChEBI" id="CHEBI:18420"/>
        <label>2</label>
    </ligand>
</feature>
<dbReference type="EC" id="2.4.2.18" evidence="1"/>
<dbReference type="EMBL" id="AP008230">
    <property type="protein sequence ID" value="BAE84988.1"/>
    <property type="molecule type" value="Genomic_DNA"/>
</dbReference>
<dbReference type="RefSeq" id="WP_011460914.1">
    <property type="nucleotide sequence ID" value="NC_007907.1"/>
</dbReference>
<dbReference type="SMR" id="Q24SK4"/>
<dbReference type="STRING" id="138119.DSY3199"/>
<dbReference type="KEGG" id="dsy:DSY3199"/>
<dbReference type="eggNOG" id="COG0547">
    <property type="taxonomic scope" value="Bacteria"/>
</dbReference>
<dbReference type="HOGENOM" id="CLU_034315_2_1_9"/>
<dbReference type="UniPathway" id="UPA00035">
    <property type="reaction ID" value="UER00041"/>
</dbReference>
<dbReference type="Proteomes" id="UP000001946">
    <property type="component" value="Chromosome"/>
</dbReference>
<dbReference type="GO" id="GO:0005829">
    <property type="term" value="C:cytosol"/>
    <property type="evidence" value="ECO:0007669"/>
    <property type="project" value="TreeGrafter"/>
</dbReference>
<dbReference type="GO" id="GO:0004048">
    <property type="term" value="F:anthranilate phosphoribosyltransferase activity"/>
    <property type="evidence" value="ECO:0007669"/>
    <property type="project" value="UniProtKB-UniRule"/>
</dbReference>
<dbReference type="GO" id="GO:0000287">
    <property type="term" value="F:magnesium ion binding"/>
    <property type="evidence" value="ECO:0007669"/>
    <property type="project" value="UniProtKB-UniRule"/>
</dbReference>
<dbReference type="GO" id="GO:0000162">
    <property type="term" value="P:L-tryptophan biosynthetic process"/>
    <property type="evidence" value="ECO:0007669"/>
    <property type="project" value="UniProtKB-UniRule"/>
</dbReference>
<dbReference type="FunFam" id="3.40.1030.10:FF:000002">
    <property type="entry name" value="Anthranilate phosphoribosyltransferase"/>
    <property type="match status" value="1"/>
</dbReference>
<dbReference type="Gene3D" id="3.40.1030.10">
    <property type="entry name" value="Nucleoside phosphorylase/phosphoribosyltransferase catalytic domain"/>
    <property type="match status" value="1"/>
</dbReference>
<dbReference type="Gene3D" id="1.20.970.10">
    <property type="entry name" value="Transferase, Pyrimidine Nucleoside Phosphorylase, Chain C"/>
    <property type="match status" value="1"/>
</dbReference>
<dbReference type="HAMAP" id="MF_00211">
    <property type="entry name" value="TrpD"/>
    <property type="match status" value="1"/>
</dbReference>
<dbReference type="InterPro" id="IPR005940">
    <property type="entry name" value="Anthranilate_Pribosyl_Tfrase"/>
</dbReference>
<dbReference type="InterPro" id="IPR000312">
    <property type="entry name" value="Glycosyl_Trfase_fam3"/>
</dbReference>
<dbReference type="InterPro" id="IPR017459">
    <property type="entry name" value="Glycosyl_Trfase_fam3_N_dom"/>
</dbReference>
<dbReference type="InterPro" id="IPR036320">
    <property type="entry name" value="Glycosyl_Trfase_fam3_N_dom_sf"/>
</dbReference>
<dbReference type="InterPro" id="IPR035902">
    <property type="entry name" value="Nuc_phospho_transferase"/>
</dbReference>
<dbReference type="NCBIfam" id="TIGR01245">
    <property type="entry name" value="trpD"/>
    <property type="match status" value="1"/>
</dbReference>
<dbReference type="PANTHER" id="PTHR43285">
    <property type="entry name" value="ANTHRANILATE PHOSPHORIBOSYLTRANSFERASE"/>
    <property type="match status" value="1"/>
</dbReference>
<dbReference type="PANTHER" id="PTHR43285:SF2">
    <property type="entry name" value="ANTHRANILATE PHOSPHORIBOSYLTRANSFERASE"/>
    <property type="match status" value="1"/>
</dbReference>
<dbReference type="Pfam" id="PF02885">
    <property type="entry name" value="Glycos_trans_3N"/>
    <property type="match status" value="1"/>
</dbReference>
<dbReference type="Pfam" id="PF00591">
    <property type="entry name" value="Glycos_transf_3"/>
    <property type="match status" value="1"/>
</dbReference>
<dbReference type="SUPFAM" id="SSF52418">
    <property type="entry name" value="Nucleoside phosphorylase/phosphoribosyltransferase catalytic domain"/>
    <property type="match status" value="1"/>
</dbReference>
<dbReference type="SUPFAM" id="SSF47648">
    <property type="entry name" value="Nucleoside phosphorylase/phosphoribosyltransferase N-terminal domain"/>
    <property type="match status" value="1"/>
</dbReference>
<gene>
    <name evidence="1" type="primary">trpD</name>
    <name type="ordered locus">DSY3199</name>
</gene>
<protein>
    <recommendedName>
        <fullName evidence="1">Anthranilate phosphoribosyltransferase</fullName>
        <ecNumber evidence="1">2.4.2.18</ecNumber>
    </recommendedName>
</protein>
<evidence type="ECO:0000255" key="1">
    <source>
        <dbReference type="HAMAP-Rule" id="MF_00211"/>
    </source>
</evidence>
<comment type="function">
    <text evidence="1">Catalyzes the transfer of the phosphoribosyl group of 5-phosphorylribose-1-pyrophosphate (PRPP) to anthranilate to yield N-(5'-phosphoribosyl)-anthranilate (PRA).</text>
</comment>
<comment type="catalytic activity">
    <reaction evidence="1">
        <text>N-(5-phospho-beta-D-ribosyl)anthranilate + diphosphate = 5-phospho-alpha-D-ribose 1-diphosphate + anthranilate</text>
        <dbReference type="Rhea" id="RHEA:11768"/>
        <dbReference type="ChEBI" id="CHEBI:16567"/>
        <dbReference type="ChEBI" id="CHEBI:18277"/>
        <dbReference type="ChEBI" id="CHEBI:33019"/>
        <dbReference type="ChEBI" id="CHEBI:58017"/>
        <dbReference type="EC" id="2.4.2.18"/>
    </reaction>
</comment>
<comment type="cofactor">
    <cofactor evidence="1">
        <name>Mg(2+)</name>
        <dbReference type="ChEBI" id="CHEBI:18420"/>
    </cofactor>
    <text evidence="1">Binds 2 magnesium ions per monomer.</text>
</comment>
<comment type="pathway">
    <text evidence="1">Amino-acid biosynthesis; L-tryptophan biosynthesis; L-tryptophan from chorismate: step 2/5.</text>
</comment>
<comment type="subunit">
    <text evidence="1">Homodimer.</text>
</comment>
<comment type="similarity">
    <text evidence="1">Belongs to the anthranilate phosphoribosyltransferase family.</text>
</comment>
<keyword id="KW-0028">Amino-acid biosynthesis</keyword>
<keyword id="KW-0057">Aromatic amino acid biosynthesis</keyword>
<keyword id="KW-0328">Glycosyltransferase</keyword>
<keyword id="KW-0460">Magnesium</keyword>
<keyword id="KW-0479">Metal-binding</keyword>
<keyword id="KW-1185">Reference proteome</keyword>
<keyword id="KW-0808">Transferase</keyword>
<keyword id="KW-0822">Tryptophan biosynthesis</keyword>
<proteinExistence type="inferred from homology"/>
<sequence>MTYAIHESLTLLSQKQDLPEELTFTVVQDLLSGELTPAQIGGLLLGLSLKGETPEEIAAFAQALRGAGLKIKAPAGTLDTCGTGGDRSGTFNISTTAAFVIAGAGVPVAKHGNRFASGRCGSADVLEQLGISLKATPESSERHLQHIGMTFLFAQVYHPAMAKVAAERRELGIRTIFNLLGPLLNPAGAPYQLLGVSSPSLLPKMAKALQILGSKRAVVAVGEDGLDEVTLTGATQAILIDGGEIQPFIIRPEEYGLNLCSLQDLQGGTPAENGQITLRILQGKKGPQRDIVLLNAGTALYAANKAAGIREGIALAAESLDSGKALSILEKLKASA</sequence>
<reference key="1">
    <citation type="journal article" date="2006" name="J. Bacteriol.">
        <title>Complete genome sequence of the dehalorespiring bacterium Desulfitobacterium hafniense Y51 and comparison with Dehalococcoides ethenogenes 195.</title>
        <authorList>
            <person name="Nonaka H."/>
            <person name="Keresztes G."/>
            <person name="Shinoda Y."/>
            <person name="Ikenaga Y."/>
            <person name="Abe M."/>
            <person name="Naito K."/>
            <person name="Inatomi K."/>
            <person name="Furukawa K."/>
            <person name="Inui M."/>
            <person name="Yukawa H."/>
        </authorList>
    </citation>
    <scope>NUCLEOTIDE SEQUENCE [LARGE SCALE GENOMIC DNA]</scope>
    <source>
        <strain>Y51</strain>
    </source>
</reference>
<accession>Q24SK4</accession>